<gene>
    <name evidence="1" type="primary">rpoA</name>
    <name type="ordered locus">Jann_0617</name>
</gene>
<evidence type="ECO:0000255" key="1">
    <source>
        <dbReference type="HAMAP-Rule" id="MF_00059"/>
    </source>
</evidence>
<comment type="function">
    <text evidence="1">DNA-dependent RNA polymerase catalyzes the transcription of DNA into RNA using the four ribonucleoside triphosphates as substrates.</text>
</comment>
<comment type="catalytic activity">
    <reaction evidence="1">
        <text>RNA(n) + a ribonucleoside 5'-triphosphate = RNA(n+1) + diphosphate</text>
        <dbReference type="Rhea" id="RHEA:21248"/>
        <dbReference type="Rhea" id="RHEA-COMP:14527"/>
        <dbReference type="Rhea" id="RHEA-COMP:17342"/>
        <dbReference type="ChEBI" id="CHEBI:33019"/>
        <dbReference type="ChEBI" id="CHEBI:61557"/>
        <dbReference type="ChEBI" id="CHEBI:140395"/>
        <dbReference type="EC" id="2.7.7.6"/>
    </reaction>
</comment>
<comment type="subunit">
    <text evidence="1">Homodimer. The RNAP catalytic core consists of 2 alpha, 1 beta, 1 beta' and 1 omega subunit. When a sigma factor is associated with the core the holoenzyme is formed, which can initiate transcription.</text>
</comment>
<comment type="domain">
    <text evidence="1">The N-terminal domain is essential for RNAP assembly and basal transcription, whereas the C-terminal domain is involved in interaction with transcriptional regulators and with upstream promoter elements.</text>
</comment>
<comment type="similarity">
    <text evidence="1">Belongs to the RNA polymerase alpha chain family.</text>
</comment>
<keyword id="KW-0240">DNA-directed RNA polymerase</keyword>
<keyword id="KW-0548">Nucleotidyltransferase</keyword>
<keyword id="KW-1185">Reference proteome</keyword>
<keyword id="KW-0804">Transcription</keyword>
<keyword id="KW-0808">Transferase</keyword>
<accession>Q28US8</accession>
<dbReference type="EC" id="2.7.7.6" evidence="1"/>
<dbReference type="EMBL" id="CP000264">
    <property type="protein sequence ID" value="ABD53534.1"/>
    <property type="molecule type" value="Genomic_DNA"/>
</dbReference>
<dbReference type="RefSeq" id="WP_011453742.1">
    <property type="nucleotide sequence ID" value="NC_007802.1"/>
</dbReference>
<dbReference type="SMR" id="Q28US8"/>
<dbReference type="STRING" id="290400.Jann_0617"/>
<dbReference type="KEGG" id="jan:Jann_0617"/>
<dbReference type="eggNOG" id="COG0202">
    <property type="taxonomic scope" value="Bacteria"/>
</dbReference>
<dbReference type="HOGENOM" id="CLU_053084_0_0_5"/>
<dbReference type="OrthoDB" id="9805706at2"/>
<dbReference type="Proteomes" id="UP000008326">
    <property type="component" value="Chromosome"/>
</dbReference>
<dbReference type="GO" id="GO:0005737">
    <property type="term" value="C:cytoplasm"/>
    <property type="evidence" value="ECO:0007669"/>
    <property type="project" value="UniProtKB-ARBA"/>
</dbReference>
<dbReference type="GO" id="GO:0000428">
    <property type="term" value="C:DNA-directed RNA polymerase complex"/>
    <property type="evidence" value="ECO:0007669"/>
    <property type="project" value="UniProtKB-KW"/>
</dbReference>
<dbReference type="GO" id="GO:0003677">
    <property type="term" value="F:DNA binding"/>
    <property type="evidence" value="ECO:0007669"/>
    <property type="project" value="UniProtKB-UniRule"/>
</dbReference>
<dbReference type="GO" id="GO:0003899">
    <property type="term" value="F:DNA-directed RNA polymerase activity"/>
    <property type="evidence" value="ECO:0007669"/>
    <property type="project" value="UniProtKB-UniRule"/>
</dbReference>
<dbReference type="GO" id="GO:0046983">
    <property type="term" value="F:protein dimerization activity"/>
    <property type="evidence" value="ECO:0007669"/>
    <property type="project" value="InterPro"/>
</dbReference>
<dbReference type="GO" id="GO:0006351">
    <property type="term" value="P:DNA-templated transcription"/>
    <property type="evidence" value="ECO:0007669"/>
    <property type="project" value="UniProtKB-UniRule"/>
</dbReference>
<dbReference type="CDD" id="cd06928">
    <property type="entry name" value="RNAP_alpha_NTD"/>
    <property type="match status" value="1"/>
</dbReference>
<dbReference type="FunFam" id="1.10.150.20:FF:000001">
    <property type="entry name" value="DNA-directed RNA polymerase subunit alpha"/>
    <property type="match status" value="1"/>
</dbReference>
<dbReference type="FunFam" id="2.170.120.12:FF:000001">
    <property type="entry name" value="DNA-directed RNA polymerase subunit alpha"/>
    <property type="match status" value="1"/>
</dbReference>
<dbReference type="Gene3D" id="1.10.150.20">
    <property type="entry name" value="5' to 3' exonuclease, C-terminal subdomain"/>
    <property type="match status" value="1"/>
</dbReference>
<dbReference type="Gene3D" id="2.170.120.12">
    <property type="entry name" value="DNA-directed RNA polymerase, insert domain"/>
    <property type="match status" value="1"/>
</dbReference>
<dbReference type="Gene3D" id="3.30.1360.10">
    <property type="entry name" value="RNA polymerase, RBP11-like subunit"/>
    <property type="match status" value="1"/>
</dbReference>
<dbReference type="HAMAP" id="MF_00059">
    <property type="entry name" value="RNApol_bact_RpoA"/>
    <property type="match status" value="1"/>
</dbReference>
<dbReference type="InterPro" id="IPR011262">
    <property type="entry name" value="DNA-dir_RNA_pol_insert"/>
</dbReference>
<dbReference type="InterPro" id="IPR011263">
    <property type="entry name" value="DNA-dir_RNA_pol_RpoA/D/Rpb3"/>
</dbReference>
<dbReference type="InterPro" id="IPR011773">
    <property type="entry name" value="DNA-dir_RpoA"/>
</dbReference>
<dbReference type="InterPro" id="IPR036603">
    <property type="entry name" value="RBP11-like"/>
</dbReference>
<dbReference type="InterPro" id="IPR011260">
    <property type="entry name" value="RNAP_asu_C"/>
</dbReference>
<dbReference type="InterPro" id="IPR036643">
    <property type="entry name" value="RNApol_insert_sf"/>
</dbReference>
<dbReference type="NCBIfam" id="NF003513">
    <property type="entry name" value="PRK05182.1-2"/>
    <property type="match status" value="1"/>
</dbReference>
<dbReference type="NCBIfam" id="NF003519">
    <property type="entry name" value="PRK05182.2-5"/>
    <property type="match status" value="1"/>
</dbReference>
<dbReference type="NCBIfam" id="TIGR02027">
    <property type="entry name" value="rpoA"/>
    <property type="match status" value="1"/>
</dbReference>
<dbReference type="Pfam" id="PF01000">
    <property type="entry name" value="RNA_pol_A_bac"/>
    <property type="match status" value="1"/>
</dbReference>
<dbReference type="Pfam" id="PF03118">
    <property type="entry name" value="RNA_pol_A_CTD"/>
    <property type="match status" value="1"/>
</dbReference>
<dbReference type="Pfam" id="PF01193">
    <property type="entry name" value="RNA_pol_L"/>
    <property type="match status" value="1"/>
</dbReference>
<dbReference type="SMART" id="SM00662">
    <property type="entry name" value="RPOLD"/>
    <property type="match status" value="1"/>
</dbReference>
<dbReference type="SUPFAM" id="SSF47789">
    <property type="entry name" value="C-terminal domain of RNA polymerase alpha subunit"/>
    <property type="match status" value="1"/>
</dbReference>
<dbReference type="SUPFAM" id="SSF56553">
    <property type="entry name" value="Insert subdomain of RNA polymerase alpha subunit"/>
    <property type="match status" value="1"/>
</dbReference>
<dbReference type="SUPFAM" id="SSF55257">
    <property type="entry name" value="RBP11-like subunits of RNA polymerase"/>
    <property type="match status" value="1"/>
</dbReference>
<organism>
    <name type="scientific">Jannaschia sp. (strain CCS1)</name>
    <dbReference type="NCBI Taxonomy" id="290400"/>
    <lineage>
        <taxon>Bacteria</taxon>
        <taxon>Pseudomonadati</taxon>
        <taxon>Pseudomonadota</taxon>
        <taxon>Alphaproteobacteria</taxon>
        <taxon>Rhodobacterales</taxon>
        <taxon>Roseobacteraceae</taxon>
        <taxon>Jannaschia</taxon>
    </lineage>
</organism>
<proteinExistence type="inferred from homology"/>
<protein>
    <recommendedName>
        <fullName evidence="1">DNA-directed RNA polymerase subunit alpha</fullName>
        <shortName evidence="1">RNAP subunit alpha</shortName>
        <ecNumber evidence="1">2.7.7.6</ecNumber>
    </recommendedName>
    <alternativeName>
        <fullName evidence="1">RNA polymerase subunit alpha</fullName>
    </alternativeName>
    <alternativeName>
        <fullName evidence="1">Transcriptase subunit alpha</fullName>
    </alternativeName>
</protein>
<reference key="1">
    <citation type="submission" date="2006-02" db="EMBL/GenBank/DDBJ databases">
        <title>Complete sequence of chromosome of Jannaschia sp. CCS1.</title>
        <authorList>
            <consortium name="US DOE Joint Genome Institute"/>
            <person name="Copeland A."/>
            <person name="Lucas S."/>
            <person name="Lapidus A."/>
            <person name="Barry K."/>
            <person name="Detter J.C."/>
            <person name="Glavina del Rio T."/>
            <person name="Hammon N."/>
            <person name="Israni S."/>
            <person name="Pitluck S."/>
            <person name="Brettin T."/>
            <person name="Bruce D."/>
            <person name="Han C."/>
            <person name="Tapia R."/>
            <person name="Gilna P."/>
            <person name="Chertkov O."/>
            <person name="Saunders E."/>
            <person name="Schmutz J."/>
            <person name="Larimer F."/>
            <person name="Land M."/>
            <person name="Kyrpides N."/>
            <person name="Lykidis A."/>
            <person name="Moran M.A."/>
            <person name="Belas R."/>
            <person name="Ye W."/>
            <person name="Buchan A."/>
            <person name="Gonzalez J.M."/>
            <person name="Schell M.A."/>
            <person name="Richardson P."/>
        </authorList>
    </citation>
    <scope>NUCLEOTIDE SEQUENCE [LARGE SCALE GENOMIC DNA]</scope>
    <source>
        <strain>CCS1</strain>
    </source>
</reference>
<sequence length="338" mass="37150">MIHKNWQELIKPTQLVVQPGTDPARKATVVAEPLERGFGLTLGNALRRVLMSSLQGAAITSVQIDGVLHEFSSVAGVREDVTDIVLNLKGVAIRMDAEGPKRVSISAKGPRVVTAGDISESAGIDVLNKDHVICHLDDGADLYIELTVNTGKGYVAADKNRPEDAPIGLMPIDAIYSPVKKVSYDVQPTREGQVLDYDKLTLKLETDGSLSPDDAVAYAARIIQDQLSIFVNFDEPESATRQDDEDDLEFNPLLLKKVDELELSVRSANCLKNDNIVYIGDLIQKTEAEMLRTPNFGRKSLNEIKEVLSGMGLHLGMDIVDWPPDNIEELAKKYEDNF</sequence>
<name>RPOA_JANSC</name>
<feature type="chain" id="PRO_0000264508" description="DNA-directed RNA polymerase subunit alpha">
    <location>
        <begin position="1"/>
        <end position="338"/>
    </location>
</feature>
<feature type="region of interest" description="Alpha N-terminal domain (alpha-NTD)" evidence="1">
    <location>
        <begin position="1"/>
        <end position="234"/>
    </location>
</feature>
<feature type="region of interest" description="Alpha C-terminal domain (alpha-CTD)" evidence="1">
    <location>
        <begin position="250"/>
        <end position="338"/>
    </location>
</feature>